<name>RL27_GEOSL</name>
<feature type="chain" id="PRO_0000181093" description="Large ribosomal subunit protein bL27">
    <location>
        <begin position="1"/>
        <end position="85"/>
    </location>
</feature>
<feature type="region of interest" description="Disordered" evidence="2">
    <location>
        <begin position="1"/>
        <end position="21"/>
    </location>
</feature>
<keyword id="KW-1185">Reference proteome</keyword>
<keyword id="KW-0687">Ribonucleoprotein</keyword>
<keyword id="KW-0689">Ribosomal protein</keyword>
<reference key="1">
    <citation type="journal article" date="2003" name="Science">
        <title>Genome of Geobacter sulfurreducens: metal reduction in subsurface environments.</title>
        <authorList>
            <person name="Methe B.A."/>
            <person name="Nelson K.E."/>
            <person name="Eisen J.A."/>
            <person name="Paulsen I.T."/>
            <person name="Nelson W.C."/>
            <person name="Heidelberg J.F."/>
            <person name="Wu D."/>
            <person name="Wu M."/>
            <person name="Ward N.L."/>
            <person name="Beanan M.J."/>
            <person name="Dodson R.J."/>
            <person name="Madupu R."/>
            <person name="Brinkac L.M."/>
            <person name="Daugherty S.C."/>
            <person name="DeBoy R.T."/>
            <person name="Durkin A.S."/>
            <person name="Gwinn M.L."/>
            <person name="Kolonay J.F."/>
            <person name="Sullivan S.A."/>
            <person name="Haft D.H."/>
            <person name="Selengut J."/>
            <person name="Davidsen T.M."/>
            <person name="Zafar N."/>
            <person name="White O."/>
            <person name="Tran B."/>
            <person name="Romero C."/>
            <person name="Forberger H.A."/>
            <person name="Weidman J.F."/>
            <person name="Khouri H.M."/>
            <person name="Feldblyum T.V."/>
            <person name="Utterback T.R."/>
            <person name="Van Aken S.E."/>
            <person name="Lovley D.R."/>
            <person name="Fraser C.M."/>
        </authorList>
    </citation>
    <scope>NUCLEOTIDE SEQUENCE [LARGE SCALE GENOMIC DNA]</scope>
    <source>
        <strain>ATCC 51573 / DSM 12127 / PCA</strain>
    </source>
</reference>
<comment type="similarity">
    <text evidence="1">Belongs to the bacterial ribosomal protein bL27 family.</text>
</comment>
<sequence length="85" mass="9326">MAHKKGVGSTRNGRDSESKRLGCKKFGGETVKAGNIIYRQRGTQIHPGTNVGCGKDYTLFALIDGVVKFERLGRDRKKVSVYPAN</sequence>
<dbReference type="EMBL" id="AE017180">
    <property type="protein sequence ID" value="AAR36626.1"/>
    <property type="molecule type" value="Genomic_DNA"/>
</dbReference>
<dbReference type="RefSeq" id="NP_954276.1">
    <property type="nucleotide sequence ID" value="NC_002939.5"/>
</dbReference>
<dbReference type="RefSeq" id="WP_010943850.1">
    <property type="nucleotide sequence ID" value="NC_002939.5"/>
</dbReference>
<dbReference type="SMR" id="Q747N0"/>
<dbReference type="FunCoup" id="Q747N0">
    <property type="interactions" value="604"/>
</dbReference>
<dbReference type="STRING" id="243231.GSU3235"/>
<dbReference type="EnsemblBacteria" id="AAR36626">
    <property type="protein sequence ID" value="AAR36626"/>
    <property type="gene ID" value="GSU3235"/>
</dbReference>
<dbReference type="KEGG" id="gsu:GSU3235"/>
<dbReference type="PATRIC" id="fig|243231.5.peg.3255"/>
<dbReference type="eggNOG" id="COG0211">
    <property type="taxonomic scope" value="Bacteria"/>
</dbReference>
<dbReference type="HOGENOM" id="CLU_095424_4_0_7"/>
<dbReference type="InParanoid" id="Q747N0"/>
<dbReference type="OrthoDB" id="9803474at2"/>
<dbReference type="Proteomes" id="UP000000577">
    <property type="component" value="Chromosome"/>
</dbReference>
<dbReference type="GO" id="GO:0022625">
    <property type="term" value="C:cytosolic large ribosomal subunit"/>
    <property type="evidence" value="ECO:0000318"/>
    <property type="project" value="GO_Central"/>
</dbReference>
<dbReference type="GO" id="GO:0003735">
    <property type="term" value="F:structural constituent of ribosome"/>
    <property type="evidence" value="ECO:0000318"/>
    <property type="project" value="GO_Central"/>
</dbReference>
<dbReference type="GO" id="GO:0006412">
    <property type="term" value="P:translation"/>
    <property type="evidence" value="ECO:0007669"/>
    <property type="project" value="UniProtKB-UniRule"/>
</dbReference>
<dbReference type="FunFam" id="2.40.50.100:FF:000004">
    <property type="entry name" value="50S ribosomal protein L27"/>
    <property type="match status" value="1"/>
</dbReference>
<dbReference type="Gene3D" id="2.40.50.100">
    <property type="match status" value="1"/>
</dbReference>
<dbReference type="HAMAP" id="MF_00539">
    <property type="entry name" value="Ribosomal_bL27"/>
    <property type="match status" value="1"/>
</dbReference>
<dbReference type="InterPro" id="IPR001684">
    <property type="entry name" value="Ribosomal_bL27"/>
</dbReference>
<dbReference type="InterPro" id="IPR018261">
    <property type="entry name" value="Ribosomal_bL27_CS"/>
</dbReference>
<dbReference type="NCBIfam" id="TIGR00062">
    <property type="entry name" value="L27"/>
    <property type="match status" value="1"/>
</dbReference>
<dbReference type="PANTHER" id="PTHR15893:SF0">
    <property type="entry name" value="LARGE RIBOSOMAL SUBUNIT PROTEIN BL27M"/>
    <property type="match status" value="1"/>
</dbReference>
<dbReference type="PANTHER" id="PTHR15893">
    <property type="entry name" value="RIBOSOMAL PROTEIN L27"/>
    <property type="match status" value="1"/>
</dbReference>
<dbReference type="Pfam" id="PF01016">
    <property type="entry name" value="Ribosomal_L27"/>
    <property type="match status" value="1"/>
</dbReference>
<dbReference type="PRINTS" id="PR00063">
    <property type="entry name" value="RIBOSOMALL27"/>
</dbReference>
<dbReference type="SUPFAM" id="SSF110324">
    <property type="entry name" value="Ribosomal L27 protein-like"/>
    <property type="match status" value="1"/>
</dbReference>
<dbReference type="PROSITE" id="PS00831">
    <property type="entry name" value="RIBOSOMAL_L27"/>
    <property type="match status" value="1"/>
</dbReference>
<accession>Q747N0</accession>
<evidence type="ECO:0000255" key="1">
    <source>
        <dbReference type="HAMAP-Rule" id="MF_00539"/>
    </source>
</evidence>
<evidence type="ECO:0000256" key="2">
    <source>
        <dbReference type="SAM" id="MobiDB-lite"/>
    </source>
</evidence>
<evidence type="ECO:0000305" key="3"/>
<proteinExistence type="inferred from homology"/>
<organism>
    <name type="scientific">Geobacter sulfurreducens (strain ATCC 51573 / DSM 12127 / PCA)</name>
    <dbReference type="NCBI Taxonomy" id="243231"/>
    <lineage>
        <taxon>Bacteria</taxon>
        <taxon>Pseudomonadati</taxon>
        <taxon>Thermodesulfobacteriota</taxon>
        <taxon>Desulfuromonadia</taxon>
        <taxon>Geobacterales</taxon>
        <taxon>Geobacteraceae</taxon>
        <taxon>Geobacter</taxon>
    </lineage>
</organism>
<protein>
    <recommendedName>
        <fullName evidence="1">Large ribosomal subunit protein bL27</fullName>
    </recommendedName>
    <alternativeName>
        <fullName evidence="3">50S ribosomal protein L27</fullName>
    </alternativeName>
</protein>
<gene>
    <name evidence="1" type="primary">rpmA</name>
    <name type="ordered locus">GSU3235</name>
</gene>